<name>POF21_ARATH</name>
<reference key="1">
    <citation type="journal article" date="1991" name="Plant J.">
        <title>Isolation and molecular characterization of PosF21, an Arabidopsis thaliana gene which shows characteristics of a b-Zip class transcription factor.</title>
        <authorList>
            <person name="Aeschbacher R.A."/>
            <person name="Schrott M."/>
            <person name="Potrykus I."/>
            <person name="Saul M.W."/>
        </authorList>
    </citation>
    <scope>NUCLEOTIDE SEQUENCE [GENOMIC DNA]</scope>
    <source>
        <strain>cv. Zurich</strain>
        <tissue>Leaf</tissue>
    </source>
</reference>
<reference key="2">
    <citation type="journal article" date="1999" name="Nature">
        <title>Sequence and analysis of chromosome 2 of the plant Arabidopsis thaliana.</title>
        <authorList>
            <person name="Lin X."/>
            <person name="Kaul S."/>
            <person name="Rounsley S.D."/>
            <person name="Shea T.P."/>
            <person name="Benito M.-I."/>
            <person name="Town C.D."/>
            <person name="Fujii C.Y."/>
            <person name="Mason T.M."/>
            <person name="Bowman C.L."/>
            <person name="Barnstead M.E."/>
            <person name="Feldblyum T.V."/>
            <person name="Buell C.R."/>
            <person name="Ketchum K.A."/>
            <person name="Lee J.J."/>
            <person name="Ronning C.M."/>
            <person name="Koo H.L."/>
            <person name="Moffat K.S."/>
            <person name="Cronin L.A."/>
            <person name="Shen M."/>
            <person name="Pai G."/>
            <person name="Van Aken S."/>
            <person name="Umayam L."/>
            <person name="Tallon L.J."/>
            <person name="Gill J.E."/>
            <person name="Adams M.D."/>
            <person name="Carrera A.J."/>
            <person name="Creasy T.H."/>
            <person name="Goodman H.M."/>
            <person name="Somerville C.R."/>
            <person name="Copenhaver G.P."/>
            <person name="Preuss D."/>
            <person name="Nierman W.C."/>
            <person name="White O."/>
            <person name="Eisen J.A."/>
            <person name="Salzberg S.L."/>
            <person name="Fraser C.M."/>
            <person name="Venter J.C."/>
        </authorList>
    </citation>
    <scope>NUCLEOTIDE SEQUENCE [LARGE SCALE GENOMIC DNA]</scope>
    <source>
        <strain>cv. Columbia</strain>
    </source>
</reference>
<reference key="3">
    <citation type="journal article" date="2017" name="Plant J.">
        <title>Araport11: a complete reannotation of the Arabidopsis thaliana reference genome.</title>
        <authorList>
            <person name="Cheng C.Y."/>
            <person name="Krishnakumar V."/>
            <person name="Chan A.P."/>
            <person name="Thibaud-Nissen F."/>
            <person name="Schobel S."/>
            <person name="Town C.D."/>
        </authorList>
    </citation>
    <scope>GENOME REANNOTATION</scope>
    <source>
        <strain>cv. Columbia</strain>
    </source>
</reference>
<reference key="4">
    <citation type="journal article" date="2003" name="Science">
        <title>Empirical analysis of transcriptional activity in the Arabidopsis genome.</title>
        <authorList>
            <person name="Yamada K."/>
            <person name="Lim J."/>
            <person name="Dale J.M."/>
            <person name="Chen H."/>
            <person name="Shinn P."/>
            <person name="Palm C.J."/>
            <person name="Southwick A.M."/>
            <person name="Wu H.C."/>
            <person name="Kim C.J."/>
            <person name="Nguyen M."/>
            <person name="Pham P.K."/>
            <person name="Cheuk R.F."/>
            <person name="Karlin-Newmann G."/>
            <person name="Liu S.X."/>
            <person name="Lam B."/>
            <person name="Sakano H."/>
            <person name="Wu T."/>
            <person name="Yu G."/>
            <person name="Miranda M."/>
            <person name="Quach H.L."/>
            <person name="Tripp M."/>
            <person name="Chang C.H."/>
            <person name="Lee J.M."/>
            <person name="Toriumi M.J."/>
            <person name="Chan M.M."/>
            <person name="Tang C.C."/>
            <person name="Onodera C.S."/>
            <person name="Deng J.M."/>
            <person name="Akiyama K."/>
            <person name="Ansari Y."/>
            <person name="Arakawa T."/>
            <person name="Banh J."/>
            <person name="Banno F."/>
            <person name="Bowser L."/>
            <person name="Brooks S.Y."/>
            <person name="Carninci P."/>
            <person name="Chao Q."/>
            <person name="Choy N."/>
            <person name="Enju A."/>
            <person name="Goldsmith A.D."/>
            <person name="Gurjal M."/>
            <person name="Hansen N.F."/>
            <person name="Hayashizaki Y."/>
            <person name="Johnson-Hopson C."/>
            <person name="Hsuan V.W."/>
            <person name="Iida K."/>
            <person name="Karnes M."/>
            <person name="Khan S."/>
            <person name="Koesema E."/>
            <person name="Ishida J."/>
            <person name="Jiang P.X."/>
            <person name="Jones T."/>
            <person name="Kawai J."/>
            <person name="Kamiya A."/>
            <person name="Meyers C."/>
            <person name="Nakajima M."/>
            <person name="Narusaka M."/>
            <person name="Seki M."/>
            <person name="Sakurai T."/>
            <person name="Satou M."/>
            <person name="Tamse R."/>
            <person name="Vaysberg M."/>
            <person name="Wallender E.K."/>
            <person name="Wong C."/>
            <person name="Yamamura Y."/>
            <person name="Yuan S."/>
            <person name="Shinozaki K."/>
            <person name="Davis R.W."/>
            <person name="Theologis A."/>
            <person name="Ecker J.R."/>
        </authorList>
    </citation>
    <scope>NUCLEOTIDE SEQUENCE [LARGE SCALE MRNA]</scope>
    <source>
        <strain>cv. Columbia</strain>
    </source>
</reference>
<reference key="5">
    <citation type="journal article" date="2002" name="Trends Plant Sci.">
        <title>bZIP transcription factors in Arabidopsis.</title>
        <authorList>
            <person name="Jakoby M."/>
            <person name="Weisshaar B."/>
            <person name="Droege-Laser W."/>
            <person name="Vicente-Carbajosa J."/>
            <person name="Tiedemann J."/>
            <person name="Kroj T."/>
            <person name="Parcy F."/>
        </authorList>
    </citation>
    <scope>GENE FAMILY</scope>
    <scope>NOMENCLATURE</scope>
</reference>
<feature type="chain" id="PRO_0000076569" description="Probable transcription factor PosF21">
    <location>
        <begin position="1"/>
        <end position="398"/>
    </location>
</feature>
<feature type="domain" description="bZIP" evidence="1">
    <location>
        <begin position="201"/>
        <end position="264"/>
    </location>
</feature>
<feature type="region of interest" description="Disordered" evidence="2">
    <location>
        <begin position="1"/>
        <end position="46"/>
    </location>
</feature>
<feature type="region of interest" description="Disordered" evidence="2">
    <location>
        <begin position="112"/>
        <end position="150"/>
    </location>
</feature>
<feature type="region of interest" description="Basic motif" evidence="1">
    <location>
        <begin position="203"/>
        <end position="224"/>
    </location>
</feature>
<feature type="region of interest" description="Leucine-zipper" evidence="1">
    <location>
        <begin position="229"/>
        <end position="264"/>
    </location>
</feature>
<feature type="compositionally biased region" description="Pro residues" evidence="2">
    <location>
        <begin position="7"/>
        <end position="19"/>
    </location>
</feature>
<feature type="compositionally biased region" description="Polar residues" evidence="2">
    <location>
        <begin position="125"/>
        <end position="148"/>
    </location>
</feature>
<gene>
    <name type="primary">POSF21</name>
    <name type="synonym">BZIP59</name>
    <name type="ordered locus">At2g31370</name>
    <name type="ORF">T28P16.14</name>
</gene>
<proteinExistence type="evidence at transcript level"/>
<dbReference type="EMBL" id="X61031">
    <property type="protein sequence ID" value="CAA43366.1"/>
    <property type="molecule type" value="Genomic_DNA"/>
</dbReference>
<dbReference type="EMBL" id="AC007169">
    <property type="protein sequence ID" value="AAD26486.1"/>
    <property type="molecule type" value="Genomic_DNA"/>
</dbReference>
<dbReference type="EMBL" id="CP002685">
    <property type="protein sequence ID" value="AEC08534.1"/>
    <property type="molecule type" value="Genomic_DNA"/>
</dbReference>
<dbReference type="EMBL" id="CP002685">
    <property type="protein sequence ID" value="AEC08535.1"/>
    <property type="molecule type" value="Genomic_DNA"/>
</dbReference>
<dbReference type="EMBL" id="CP002685">
    <property type="protein sequence ID" value="AEC08536.1"/>
    <property type="molecule type" value="Genomic_DNA"/>
</dbReference>
<dbReference type="EMBL" id="CP002685">
    <property type="protein sequence ID" value="AEC08537.1"/>
    <property type="molecule type" value="Genomic_DNA"/>
</dbReference>
<dbReference type="EMBL" id="CP002685">
    <property type="protein sequence ID" value="AEC08539.1"/>
    <property type="molecule type" value="Genomic_DNA"/>
</dbReference>
<dbReference type="EMBL" id="CP002685">
    <property type="protein sequence ID" value="ANM62710.1"/>
    <property type="molecule type" value="Genomic_DNA"/>
</dbReference>
<dbReference type="EMBL" id="AY057534">
    <property type="protein sequence ID" value="AAL09774.1"/>
    <property type="molecule type" value="mRNA"/>
</dbReference>
<dbReference type="EMBL" id="AY113058">
    <property type="protein sequence ID" value="AAM47366.1"/>
    <property type="molecule type" value="mRNA"/>
</dbReference>
<dbReference type="PIR" id="S21883">
    <property type="entry name" value="S21883"/>
</dbReference>
<dbReference type="RefSeq" id="NP_001031456.2">
    <molecule id="Q04088-1"/>
    <property type="nucleotide sequence ID" value="NM_001036379.3"/>
</dbReference>
<dbReference type="RefSeq" id="NP_001189650.1">
    <molecule id="Q04088-1"/>
    <property type="nucleotide sequence ID" value="NM_001202721.1"/>
</dbReference>
<dbReference type="RefSeq" id="NP_001318327.1">
    <molecule id="Q04088-1"/>
    <property type="nucleotide sequence ID" value="NM_001336329.1"/>
</dbReference>
<dbReference type="RefSeq" id="NP_180695.1">
    <molecule id="Q04088-1"/>
    <property type="nucleotide sequence ID" value="NM_128694.2"/>
</dbReference>
<dbReference type="RefSeq" id="NP_850167.1">
    <molecule id="Q04088-1"/>
    <property type="nucleotide sequence ID" value="NM_179836.2"/>
</dbReference>
<dbReference type="RefSeq" id="NP_850168.2">
    <molecule id="Q04088-1"/>
    <property type="nucleotide sequence ID" value="NM_179837.2"/>
</dbReference>
<dbReference type="SMR" id="Q04088"/>
<dbReference type="BioGRID" id="3042">
    <property type="interactions" value="11"/>
</dbReference>
<dbReference type="FunCoup" id="Q04088">
    <property type="interactions" value="1031"/>
</dbReference>
<dbReference type="IntAct" id="Q04088">
    <property type="interactions" value="9"/>
</dbReference>
<dbReference type="STRING" id="3702.Q04088"/>
<dbReference type="iPTMnet" id="Q04088"/>
<dbReference type="PaxDb" id="3702-AT2G31370.1"/>
<dbReference type="ProteomicsDB" id="226160">
    <molecule id="Q04088-1"/>
</dbReference>
<dbReference type="EnsemblPlants" id="AT2G31370.1">
    <molecule id="Q04088-1"/>
    <property type="protein sequence ID" value="AT2G31370.1"/>
    <property type="gene ID" value="AT2G31370"/>
</dbReference>
<dbReference type="EnsemblPlants" id="AT2G31370.2">
    <molecule id="Q04088-1"/>
    <property type="protein sequence ID" value="AT2G31370.2"/>
    <property type="gene ID" value="AT2G31370"/>
</dbReference>
<dbReference type="EnsemblPlants" id="AT2G31370.3">
    <molecule id="Q04088-1"/>
    <property type="protein sequence ID" value="AT2G31370.3"/>
    <property type="gene ID" value="AT2G31370"/>
</dbReference>
<dbReference type="EnsemblPlants" id="AT2G31370.4">
    <molecule id="Q04088-1"/>
    <property type="protein sequence ID" value="AT2G31370.4"/>
    <property type="gene ID" value="AT2G31370"/>
</dbReference>
<dbReference type="EnsemblPlants" id="AT2G31370.6">
    <molecule id="Q04088-1"/>
    <property type="protein sequence ID" value="AT2G31370.6"/>
    <property type="gene ID" value="AT2G31370"/>
</dbReference>
<dbReference type="EnsemblPlants" id="AT2G31370.7">
    <molecule id="Q04088-1"/>
    <property type="protein sequence ID" value="AT2G31370.7"/>
    <property type="gene ID" value="AT2G31370"/>
</dbReference>
<dbReference type="GeneID" id="817695"/>
<dbReference type="Gramene" id="AT2G31370.1">
    <molecule id="Q04088-1"/>
    <property type="protein sequence ID" value="AT2G31370.1"/>
    <property type="gene ID" value="AT2G31370"/>
</dbReference>
<dbReference type="Gramene" id="AT2G31370.2">
    <molecule id="Q04088-1"/>
    <property type="protein sequence ID" value="AT2G31370.2"/>
    <property type="gene ID" value="AT2G31370"/>
</dbReference>
<dbReference type="Gramene" id="AT2G31370.3">
    <molecule id="Q04088-1"/>
    <property type="protein sequence ID" value="AT2G31370.3"/>
    <property type="gene ID" value="AT2G31370"/>
</dbReference>
<dbReference type="Gramene" id="AT2G31370.4">
    <molecule id="Q04088-1"/>
    <property type="protein sequence ID" value="AT2G31370.4"/>
    <property type="gene ID" value="AT2G31370"/>
</dbReference>
<dbReference type="Gramene" id="AT2G31370.6">
    <molecule id="Q04088-1"/>
    <property type="protein sequence ID" value="AT2G31370.6"/>
    <property type="gene ID" value="AT2G31370"/>
</dbReference>
<dbReference type="Gramene" id="AT2G31370.7">
    <molecule id="Q04088-1"/>
    <property type="protein sequence ID" value="AT2G31370.7"/>
    <property type="gene ID" value="AT2G31370"/>
</dbReference>
<dbReference type="KEGG" id="ath:AT2G31370"/>
<dbReference type="Araport" id="AT2G31370"/>
<dbReference type="TAIR" id="AT2G31370">
    <property type="gene designation" value="POSF21"/>
</dbReference>
<dbReference type="eggNOG" id="ENOG502QTK9">
    <property type="taxonomic scope" value="Eukaryota"/>
</dbReference>
<dbReference type="HOGENOM" id="CLU_026205_0_0_1"/>
<dbReference type="InParanoid" id="Q04088"/>
<dbReference type="PhylomeDB" id="Q04088"/>
<dbReference type="PRO" id="PR:Q04088"/>
<dbReference type="Proteomes" id="UP000006548">
    <property type="component" value="Chromosome 2"/>
</dbReference>
<dbReference type="ExpressionAtlas" id="Q04088">
    <property type="expression patterns" value="baseline and differential"/>
</dbReference>
<dbReference type="GO" id="GO:0005737">
    <property type="term" value="C:cytoplasm"/>
    <property type="evidence" value="ECO:0000314"/>
    <property type="project" value="TAIR"/>
</dbReference>
<dbReference type="GO" id="GO:0005829">
    <property type="term" value="C:cytosol"/>
    <property type="evidence" value="ECO:0000314"/>
    <property type="project" value="TAIR"/>
</dbReference>
<dbReference type="GO" id="GO:0005634">
    <property type="term" value="C:nucleus"/>
    <property type="evidence" value="ECO:0000314"/>
    <property type="project" value="TAIR"/>
</dbReference>
<dbReference type="GO" id="GO:0003700">
    <property type="term" value="F:DNA-binding transcription factor activity"/>
    <property type="evidence" value="ECO:0000250"/>
    <property type="project" value="TAIR"/>
</dbReference>
<dbReference type="GO" id="GO:0000976">
    <property type="term" value="F:transcription cis-regulatory region binding"/>
    <property type="evidence" value="ECO:0000353"/>
    <property type="project" value="TAIR"/>
</dbReference>
<dbReference type="CDD" id="cd14703">
    <property type="entry name" value="bZIP_plant_RF2"/>
    <property type="match status" value="1"/>
</dbReference>
<dbReference type="FunFam" id="1.20.5.170:FF:000009">
    <property type="entry name" value="probable transcription factor PosF21"/>
    <property type="match status" value="1"/>
</dbReference>
<dbReference type="Gene3D" id="1.20.5.170">
    <property type="match status" value="1"/>
</dbReference>
<dbReference type="InterPro" id="IPR004827">
    <property type="entry name" value="bZIP"/>
</dbReference>
<dbReference type="InterPro" id="IPR044759">
    <property type="entry name" value="bZIP_RF2"/>
</dbReference>
<dbReference type="InterPro" id="IPR046347">
    <property type="entry name" value="bZIP_sf"/>
</dbReference>
<dbReference type="PANTHER" id="PTHR13690">
    <property type="entry name" value="TRANSCRIPTION FACTOR POSF21-RELATED"/>
    <property type="match status" value="1"/>
</dbReference>
<dbReference type="PANTHER" id="PTHR13690:SF148">
    <property type="entry name" value="TRANSCRIPTION FACTOR POSF21-RELATED"/>
    <property type="match status" value="1"/>
</dbReference>
<dbReference type="Pfam" id="PF00170">
    <property type="entry name" value="bZIP_1"/>
    <property type="match status" value="1"/>
</dbReference>
<dbReference type="SMART" id="SM00338">
    <property type="entry name" value="BRLZ"/>
    <property type="match status" value="1"/>
</dbReference>
<dbReference type="SUPFAM" id="SSF57959">
    <property type="entry name" value="Leucine zipper domain"/>
    <property type="match status" value="1"/>
</dbReference>
<dbReference type="PROSITE" id="PS50217">
    <property type="entry name" value="BZIP"/>
    <property type="match status" value="1"/>
</dbReference>
<keyword id="KW-0010">Activator</keyword>
<keyword id="KW-0025">Alternative splicing</keyword>
<keyword id="KW-0238">DNA-binding</keyword>
<keyword id="KW-0539">Nucleus</keyword>
<keyword id="KW-1185">Reference proteome</keyword>
<keyword id="KW-0804">Transcription</keyword>
<keyword id="KW-0805">Transcription regulation</keyword>
<protein>
    <recommendedName>
        <fullName>Probable transcription factor PosF21</fullName>
    </recommendedName>
    <alternativeName>
        <fullName>bZIP transcription factor 59</fullName>
        <shortName>AtbZIP59</shortName>
    </alternativeName>
</protein>
<comment type="function">
    <text>Putative transcription factor with an activatory role.</text>
</comment>
<comment type="subcellular location">
    <subcellularLocation>
        <location>Nucleus</location>
    </subcellularLocation>
</comment>
<comment type="alternative products">
    <event type="alternative splicing"/>
    <isoform>
        <id>Q04088-1</id>
        <name>1</name>
        <sequence type="displayed"/>
    </isoform>
    <text>A number of isoforms are produced. According to EST sequences.</text>
</comment>
<comment type="developmental stage">
    <text>Expressed constitutively at a low level in young seedlings and in roots, stems and leaves of mature plants.</text>
</comment>
<comment type="similarity">
    <text evidence="3">Belongs to the bZIP family.</text>
</comment>
<evidence type="ECO:0000255" key="1">
    <source>
        <dbReference type="PROSITE-ProRule" id="PRU00978"/>
    </source>
</evidence>
<evidence type="ECO:0000256" key="2">
    <source>
        <dbReference type="SAM" id="MobiDB-lite"/>
    </source>
</evidence>
<evidence type="ECO:0000305" key="3"/>
<accession>Q04088</accession>
<accession>Q27GL1</accession>
<accession>Q3EBQ8</accession>
<organism>
    <name type="scientific">Arabidopsis thaliana</name>
    <name type="common">Mouse-ear cress</name>
    <dbReference type="NCBI Taxonomy" id="3702"/>
    <lineage>
        <taxon>Eukaryota</taxon>
        <taxon>Viridiplantae</taxon>
        <taxon>Streptophyta</taxon>
        <taxon>Embryophyta</taxon>
        <taxon>Tracheophyta</taxon>
        <taxon>Spermatophyta</taxon>
        <taxon>Magnoliopsida</taxon>
        <taxon>eudicotyledons</taxon>
        <taxon>Gunneridae</taxon>
        <taxon>Pentapetalae</taxon>
        <taxon>rosids</taxon>
        <taxon>malvids</taxon>
        <taxon>Brassicales</taxon>
        <taxon>Brassicaceae</taxon>
        <taxon>Camelineae</taxon>
        <taxon>Arabidopsis</taxon>
    </lineage>
</organism>
<sequence>MDKEKSPAPPCGGLPPPSPSGRCSAFSEAGPIGHGSDANRMSHDISRMLDNPPKKIGHRRAHSEILTLPDDLSFDSDLGVVGNAADGASFSDETEEDLLSMYLDMDKFNSSATSSAQVGEPSGTAWKNETMMQTGTGSTSNPQNTVNSLGERPRIRHQHSQSMDGSMNINEMLMSGNEDDSAIDAKKSMSATKLAELALIDPKRAKRIWANRQSAARSKERKTRYIFELERKVQTLQTEATTLSAQLTLLQRDTNGLTVENNELKLRLQTMEQQVHLQDELNEALKEEIQHLKVLTGQVAPSALNYGSFGSNQQQFYSNNQSMQTILAAKQFQQLQIHSQKQQQQQQQQQQQHQQQQQQQQQYQFQQQQMQQLMQQRLQQQEQQNGVRLKPSQAQKEN</sequence>